<accession>B4R313</accession>
<dbReference type="EC" id="3.1.3.16"/>
<dbReference type="EMBL" id="CM000366">
    <property type="protein sequence ID" value="EDX16867.1"/>
    <property type="molecule type" value="Genomic_DNA"/>
</dbReference>
<dbReference type="SMR" id="B4R313"/>
<dbReference type="STRING" id="7240.B4R313"/>
<dbReference type="EnsemblMetazoa" id="FBtr0216321">
    <property type="protein sequence ID" value="FBpp0214813"/>
    <property type="gene ID" value="FBgn0188028"/>
</dbReference>
<dbReference type="EnsemblMetazoa" id="XM_002105890.4">
    <property type="protein sequence ID" value="XP_002105926.1"/>
    <property type="gene ID" value="LOC6724888"/>
</dbReference>
<dbReference type="GeneID" id="6724888"/>
<dbReference type="CTD" id="192111"/>
<dbReference type="HOGENOM" id="CLU_063130_0_1_1"/>
<dbReference type="OMA" id="MPMEMIT"/>
<dbReference type="OrthoDB" id="2118094at2759"/>
<dbReference type="PhylomeDB" id="B4R313"/>
<dbReference type="Proteomes" id="UP000000304">
    <property type="component" value="Chromosome X"/>
</dbReference>
<dbReference type="Bgee" id="FBgn0188028">
    <property type="expression patterns" value="Expressed in embryo and 3 other cell types or tissues"/>
</dbReference>
<dbReference type="GO" id="GO:0005741">
    <property type="term" value="C:mitochondrial outer membrane"/>
    <property type="evidence" value="ECO:0007669"/>
    <property type="project" value="UniProtKB-SubCell"/>
</dbReference>
<dbReference type="GO" id="GO:0019900">
    <property type="term" value="F:kinase binding"/>
    <property type="evidence" value="ECO:0007669"/>
    <property type="project" value="EnsemblMetazoa"/>
</dbReference>
<dbReference type="GO" id="GO:0004721">
    <property type="term" value="F:phosphoprotein phosphatase activity"/>
    <property type="evidence" value="ECO:0000250"/>
    <property type="project" value="UniProtKB"/>
</dbReference>
<dbReference type="GO" id="GO:0043539">
    <property type="term" value="F:protein serine/threonine kinase activator activity"/>
    <property type="evidence" value="ECO:0007669"/>
    <property type="project" value="EnsemblMetazoa"/>
</dbReference>
<dbReference type="GO" id="GO:0004722">
    <property type="term" value="F:protein serine/threonine phosphatase activity"/>
    <property type="evidence" value="ECO:0007669"/>
    <property type="project" value="UniProtKB-EC"/>
</dbReference>
<dbReference type="GO" id="GO:0090141">
    <property type="term" value="P:positive regulation of mitochondrial fission"/>
    <property type="evidence" value="ECO:0007669"/>
    <property type="project" value="EnsemblMetazoa"/>
</dbReference>
<dbReference type="GO" id="GO:0010636">
    <property type="term" value="P:positive regulation of mitochondrial fusion"/>
    <property type="evidence" value="ECO:0007669"/>
    <property type="project" value="EnsemblMetazoa"/>
</dbReference>
<dbReference type="GO" id="GO:0006470">
    <property type="term" value="P:protein dephosphorylation"/>
    <property type="evidence" value="ECO:0000250"/>
    <property type="project" value="UniProtKB"/>
</dbReference>
<dbReference type="GO" id="GO:0072347">
    <property type="term" value="P:response to anesthetic"/>
    <property type="evidence" value="ECO:0007669"/>
    <property type="project" value="EnsemblMetazoa"/>
</dbReference>
<dbReference type="GO" id="GO:0009408">
    <property type="term" value="P:response to heat"/>
    <property type="evidence" value="ECO:0007669"/>
    <property type="project" value="EnsemblMetazoa"/>
</dbReference>
<dbReference type="CDD" id="cd07067">
    <property type="entry name" value="HP_PGM_like"/>
    <property type="match status" value="1"/>
</dbReference>
<dbReference type="FunFam" id="3.40.50.1240:FF:000009">
    <property type="entry name" value="serine/threonine-protein phosphatase PGAM5, mitochondrial isoform X1"/>
    <property type="match status" value="1"/>
</dbReference>
<dbReference type="Gene3D" id="3.40.50.1240">
    <property type="entry name" value="Phosphoglycerate mutase-like"/>
    <property type="match status" value="1"/>
</dbReference>
<dbReference type="InterPro" id="IPR013078">
    <property type="entry name" value="His_Pase_superF_clade-1"/>
</dbReference>
<dbReference type="InterPro" id="IPR029033">
    <property type="entry name" value="His_PPase_superfam"/>
</dbReference>
<dbReference type="InterPro" id="IPR051021">
    <property type="entry name" value="Mito_Ser/Thr_phosphatase"/>
</dbReference>
<dbReference type="PANTHER" id="PTHR20935">
    <property type="entry name" value="PHOSPHOGLYCERATE MUTASE-RELATED"/>
    <property type="match status" value="1"/>
</dbReference>
<dbReference type="PANTHER" id="PTHR20935:SF0">
    <property type="entry name" value="SERINE_THREONINE-PROTEIN PHOSPHATASE PGAM5, MITOCHONDRIAL"/>
    <property type="match status" value="1"/>
</dbReference>
<dbReference type="Pfam" id="PF00300">
    <property type="entry name" value="His_Phos_1"/>
    <property type="match status" value="2"/>
</dbReference>
<dbReference type="SMART" id="SM00855">
    <property type="entry name" value="PGAM"/>
    <property type="match status" value="1"/>
</dbReference>
<dbReference type="SUPFAM" id="SSF53254">
    <property type="entry name" value="Phosphoglycerate mutase-like"/>
    <property type="match status" value="1"/>
</dbReference>
<sequence>MRKLTSFACGTGAGLAAYYLQRLRDPQTAVQNSWTHSDKPVDPWALWDTNWDCREPRALVRPLRNSQPEEENRYNAELEKAKAKKARHIILVRHGEYLDVGDSDDTHHLTERGRKQAEFTGKRLCELGIKWDKVVASTMLRAQETSDIILKQIDFEKEKVVNCAFLREGAPIPPQPPVGHWKPEASQFLRDGSRIEAGFRRYFHRAYPDQEKESYTLIVGHGNVIRYFVCRALQFPAEGWLRININHASITWLTISPSGNVSIKYLGDSGFMPAELLTNRIPRDVKNVV</sequence>
<keyword id="KW-0378">Hydrolase</keyword>
<keyword id="KW-0472">Membrane</keyword>
<keyword id="KW-0496">Mitochondrion</keyword>
<keyword id="KW-1000">Mitochondrion outer membrane</keyword>
<keyword id="KW-1185">Reference proteome</keyword>
<keyword id="KW-0812">Transmembrane</keyword>
<keyword id="KW-1133">Transmembrane helix</keyword>
<evidence type="ECO:0000250" key="1"/>
<evidence type="ECO:0000250" key="2">
    <source>
        <dbReference type="UniProtKB" id="O46084"/>
    </source>
</evidence>
<evidence type="ECO:0000255" key="3"/>
<evidence type="ECO:0000312" key="4">
    <source>
        <dbReference type="EMBL" id="EDX16867.1"/>
    </source>
</evidence>
<proteinExistence type="inferred from homology"/>
<comment type="function">
    <text evidence="2">Displays phosphatase activity for serine/threonine residues, and dephosphorylates and activates Pk92B kinase. Has apparently no phosphoglycerate mutase activity (By similarity).</text>
</comment>
<comment type="catalytic activity">
    <reaction>
        <text>O-phospho-L-seryl-[protein] + H2O = L-seryl-[protein] + phosphate</text>
        <dbReference type="Rhea" id="RHEA:20629"/>
        <dbReference type="Rhea" id="RHEA-COMP:9863"/>
        <dbReference type="Rhea" id="RHEA-COMP:11604"/>
        <dbReference type="ChEBI" id="CHEBI:15377"/>
        <dbReference type="ChEBI" id="CHEBI:29999"/>
        <dbReference type="ChEBI" id="CHEBI:43474"/>
        <dbReference type="ChEBI" id="CHEBI:83421"/>
        <dbReference type="EC" id="3.1.3.16"/>
    </reaction>
</comment>
<comment type="catalytic activity">
    <reaction>
        <text>O-phospho-L-threonyl-[protein] + H2O = L-threonyl-[protein] + phosphate</text>
        <dbReference type="Rhea" id="RHEA:47004"/>
        <dbReference type="Rhea" id="RHEA-COMP:11060"/>
        <dbReference type="Rhea" id="RHEA-COMP:11605"/>
        <dbReference type="ChEBI" id="CHEBI:15377"/>
        <dbReference type="ChEBI" id="CHEBI:30013"/>
        <dbReference type="ChEBI" id="CHEBI:43474"/>
        <dbReference type="ChEBI" id="CHEBI:61977"/>
        <dbReference type="EC" id="3.1.3.16"/>
    </reaction>
</comment>
<comment type="subunit">
    <text evidence="2">Interacts with Pk92B/ASK1.</text>
</comment>
<comment type="subcellular location">
    <subcellularLocation>
        <location evidence="2 3">Mitochondrion outer membrane</location>
        <topology evidence="1">Single-pass membrane protein</topology>
    </subcellularLocation>
</comment>
<comment type="similarity">
    <text evidence="3">Belongs to the phosphoglycerate mutase family. BPG-dependent PGAM subfamily.</text>
</comment>
<gene>
    <name evidence="2" type="primary">Pgam5</name>
    <name type="ORF">GD16411</name>
</gene>
<organism>
    <name type="scientific">Drosophila simulans</name>
    <name type="common">Fruit fly</name>
    <dbReference type="NCBI Taxonomy" id="7240"/>
    <lineage>
        <taxon>Eukaryota</taxon>
        <taxon>Metazoa</taxon>
        <taxon>Ecdysozoa</taxon>
        <taxon>Arthropoda</taxon>
        <taxon>Hexapoda</taxon>
        <taxon>Insecta</taxon>
        <taxon>Pterygota</taxon>
        <taxon>Neoptera</taxon>
        <taxon>Endopterygota</taxon>
        <taxon>Diptera</taxon>
        <taxon>Brachycera</taxon>
        <taxon>Muscomorpha</taxon>
        <taxon>Ephydroidea</taxon>
        <taxon>Drosophilidae</taxon>
        <taxon>Drosophila</taxon>
        <taxon>Sophophora</taxon>
    </lineage>
</organism>
<reference evidence="4" key="1">
    <citation type="journal article" date="2007" name="Nature">
        <title>Evolution of genes and genomes on the Drosophila phylogeny.</title>
        <authorList>
            <consortium name="Drosophila 12 genomes consortium"/>
        </authorList>
    </citation>
    <scope>NUCLEOTIDE SEQUENCE [LARGE SCALE GENOMIC DNA]</scope>
</reference>
<name>PGAM5_DROSI</name>
<protein>
    <recommendedName>
        <fullName evidence="2">Serine/threonine-protein phosphatase Pgam5, mitochondrial</fullName>
        <ecNumber>3.1.3.16</ecNumber>
    </recommendedName>
    <alternativeName>
        <fullName evidence="2">Phosphoglycerate mutase family member 5 homolog</fullName>
    </alternativeName>
</protein>
<feature type="chain" id="PRO_0000390709" description="Serine/threonine-protein phosphatase Pgam5, mitochondrial">
    <location>
        <begin position="1"/>
        <end position="289"/>
    </location>
</feature>
<feature type="transmembrane region" description="Helical" evidence="3">
    <location>
        <begin position="7"/>
        <end position="23"/>
    </location>
</feature>